<reference key="1">
    <citation type="journal article" date="2009" name="PLoS Genet.">
        <title>Organised genome dynamics in the Escherichia coli species results in highly diverse adaptive paths.</title>
        <authorList>
            <person name="Touchon M."/>
            <person name="Hoede C."/>
            <person name="Tenaillon O."/>
            <person name="Barbe V."/>
            <person name="Baeriswyl S."/>
            <person name="Bidet P."/>
            <person name="Bingen E."/>
            <person name="Bonacorsi S."/>
            <person name="Bouchier C."/>
            <person name="Bouvet O."/>
            <person name="Calteau A."/>
            <person name="Chiapello H."/>
            <person name="Clermont O."/>
            <person name="Cruveiller S."/>
            <person name="Danchin A."/>
            <person name="Diard M."/>
            <person name="Dossat C."/>
            <person name="Karoui M.E."/>
            <person name="Frapy E."/>
            <person name="Garry L."/>
            <person name="Ghigo J.M."/>
            <person name="Gilles A.M."/>
            <person name="Johnson J."/>
            <person name="Le Bouguenec C."/>
            <person name="Lescat M."/>
            <person name="Mangenot S."/>
            <person name="Martinez-Jehanne V."/>
            <person name="Matic I."/>
            <person name="Nassif X."/>
            <person name="Oztas S."/>
            <person name="Petit M.A."/>
            <person name="Pichon C."/>
            <person name="Rouy Z."/>
            <person name="Ruf C.S."/>
            <person name="Schneider D."/>
            <person name="Tourret J."/>
            <person name="Vacherie B."/>
            <person name="Vallenet D."/>
            <person name="Medigue C."/>
            <person name="Rocha E.P.C."/>
            <person name="Denamur E."/>
        </authorList>
    </citation>
    <scope>NUCLEOTIDE SEQUENCE [LARGE SCALE GENOMIC DNA]</scope>
    <source>
        <strain>IAI1</strain>
    </source>
</reference>
<proteinExistence type="inferred from homology"/>
<dbReference type="EMBL" id="CU928160">
    <property type="protein sequence ID" value="CAQ97495.1"/>
    <property type="molecule type" value="Genomic_DNA"/>
</dbReference>
<dbReference type="RefSeq" id="WP_001269673.1">
    <property type="nucleotide sequence ID" value="NC_011741.1"/>
</dbReference>
<dbReference type="SMR" id="B7M5G8"/>
<dbReference type="GeneID" id="93776841"/>
<dbReference type="KEGG" id="ecr:ECIAI1_0625"/>
<dbReference type="HOGENOM" id="CLU_103309_1_1_6"/>
<dbReference type="GO" id="GO:0009279">
    <property type="term" value="C:cell outer membrane"/>
    <property type="evidence" value="ECO:0007669"/>
    <property type="project" value="UniProtKB-SubCell"/>
</dbReference>
<dbReference type="GO" id="GO:1990351">
    <property type="term" value="C:transporter complex"/>
    <property type="evidence" value="ECO:0007669"/>
    <property type="project" value="TreeGrafter"/>
</dbReference>
<dbReference type="GO" id="GO:0001530">
    <property type="term" value="F:lipopolysaccharide binding"/>
    <property type="evidence" value="ECO:0007669"/>
    <property type="project" value="TreeGrafter"/>
</dbReference>
<dbReference type="GO" id="GO:0043165">
    <property type="term" value="P:Gram-negative-bacterium-type cell outer membrane assembly"/>
    <property type="evidence" value="ECO:0007669"/>
    <property type="project" value="UniProtKB-UniRule"/>
</dbReference>
<dbReference type="GO" id="GO:0015920">
    <property type="term" value="P:lipopolysaccharide transport"/>
    <property type="evidence" value="ECO:0007669"/>
    <property type="project" value="TreeGrafter"/>
</dbReference>
<dbReference type="FunFam" id="3.30.160.150:FF:000001">
    <property type="entry name" value="LPS-assembly lipoprotein LptE"/>
    <property type="match status" value="1"/>
</dbReference>
<dbReference type="Gene3D" id="3.30.160.150">
    <property type="entry name" value="Lipoprotein like domain"/>
    <property type="match status" value="1"/>
</dbReference>
<dbReference type="HAMAP" id="MF_01186">
    <property type="entry name" value="LPS_assembly_LptE"/>
    <property type="match status" value="1"/>
</dbReference>
<dbReference type="InterPro" id="IPR007485">
    <property type="entry name" value="LPS_assembly_LptE"/>
</dbReference>
<dbReference type="NCBIfam" id="NF008062">
    <property type="entry name" value="PRK10796.1"/>
    <property type="match status" value="1"/>
</dbReference>
<dbReference type="PANTHER" id="PTHR38098">
    <property type="entry name" value="LPS-ASSEMBLY LIPOPROTEIN LPTE"/>
    <property type="match status" value="1"/>
</dbReference>
<dbReference type="PANTHER" id="PTHR38098:SF1">
    <property type="entry name" value="LPS-ASSEMBLY LIPOPROTEIN LPTE"/>
    <property type="match status" value="1"/>
</dbReference>
<dbReference type="Pfam" id="PF04390">
    <property type="entry name" value="LptE"/>
    <property type="match status" value="1"/>
</dbReference>
<dbReference type="PROSITE" id="PS51257">
    <property type="entry name" value="PROKAR_LIPOPROTEIN"/>
    <property type="match status" value="1"/>
</dbReference>
<protein>
    <recommendedName>
        <fullName evidence="1">LPS-assembly lipoprotein LptE</fullName>
    </recommendedName>
</protein>
<comment type="function">
    <text evidence="1">Together with LptD, is involved in the assembly of lipopolysaccharide (LPS) at the surface of the outer membrane. Required for the proper assembly of LptD. Binds LPS and may serve as the LPS recognition site at the outer membrane.</text>
</comment>
<comment type="subunit">
    <text evidence="1">Component of the lipopolysaccharide transport and assembly complex. Interacts with LptD.</text>
</comment>
<comment type="subcellular location">
    <subcellularLocation>
        <location evidence="1">Cell outer membrane</location>
        <topology evidence="1">Lipid-anchor</topology>
    </subcellularLocation>
</comment>
<comment type="similarity">
    <text evidence="1">Belongs to the LptE lipoprotein family.</text>
</comment>
<keyword id="KW-0998">Cell outer membrane</keyword>
<keyword id="KW-0449">Lipoprotein</keyword>
<keyword id="KW-0472">Membrane</keyword>
<keyword id="KW-0564">Palmitate</keyword>
<keyword id="KW-0732">Signal</keyword>
<organism>
    <name type="scientific">Escherichia coli O8 (strain IAI1)</name>
    <dbReference type="NCBI Taxonomy" id="585034"/>
    <lineage>
        <taxon>Bacteria</taxon>
        <taxon>Pseudomonadati</taxon>
        <taxon>Pseudomonadota</taxon>
        <taxon>Gammaproteobacteria</taxon>
        <taxon>Enterobacterales</taxon>
        <taxon>Enterobacteriaceae</taxon>
        <taxon>Escherichia</taxon>
    </lineage>
</organism>
<feature type="signal peptide" evidence="1">
    <location>
        <begin position="1"/>
        <end position="18"/>
    </location>
</feature>
<feature type="chain" id="PRO_1000138269" description="LPS-assembly lipoprotein LptE">
    <location>
        <begin position="19"/>
        <end position="193"/>
    </location>
</feature>
<feature type="region of interest" description="Disordered" evidence="2">
    <location>
        <begin position="166"/>
        <end position="193"/>
    </location>
</feature>
<feature type="compositionally biased region" description="Low complexity" evidence="2">
    <location>
        <begin position="174"/>
        <end position="186"/>
    </location>
</feature>
<feature type="lipid moiety-binding region" description="N-palmitoyl cysteine" evidence="1">
    <location>
        <position position="19"/>
    </location>
</feature>
<feature type="lipid moiety-binding region" description="S-diacylglycerol cysteine" evidence="1">
    <location>
        <position position="19"/>
    </location>
</feature>
<name>LPTE_ECO8A</name>
<gene>
    <name evidence="1" type="primary">lptE</name>
    <name type="synonym">rlpB</name>
    <name type="ordered locus">ECIAI1_0625</name>
</gene>
<accession>B7M5G8</accession>
<evidence type="ECO:0000255" key="1">
    <source>
        <dbReference type="HAMAP-Rule" id="MF_01186"/>
    </source>
</evidence>
<evidence type="ECO:0000256" key="2">
    <source>
        <dbReference type="SAM" id="MobiDB-lite"/>
    </source>
</evidence>
<sequence>MRYLATLLLSLAVLITAGCGWHLRDTTQVPSTMKVMILDSGDPNGPLSRAVRNQLRLNGVELLDKETTRKDVPSLRLGKVSIAKDTASVFRNGQTAEYQMIMTVNATVLIPGRDIYPISAKVFRSFFDNPQMALAKDNEQDMIVKEMYDRAAEQLIRKLPSIRAADIRSDEEQTSTTTDTPATPARVSTTLGN</sequence>